<feature type="chain" id="PRO_0000213614" description="Sporulation-specific protein 20">
    <location>
        <begin position="1"/>
        <end position="397"/>
    </location>
</feature>
<feature type="domain" description="t-SNARE coiled-coil homology" evidence="1">
    <location>
        <begin position="330"/>
        <end position="392"/>
    </location>
</feature>
<feature type="region of interest" description="Disordered" evidence="2">
    <location>
        <begin position="1"/>
        <end position="26"/>
    </location>
</feature>
<feature type="region of interest" description="Inhibitory region">
    <location>
        <begin position="4"/>
        <end position="50"/>
    </location>
</feature>
<feature type="region of interest" description="Positive regulatory region">
    <location>
        <begin position="51"/>
        <end position="95"/>
    </location>
</feature>
<feature type="compositionally biased region" description="Basic residues" evidence="2">
    <location>
        <begin position="10"/>
        <end position="26"/>
    </location>
</feature>
<feature type="mutagenesis site" description="Strong decrease of the sporulation rate and loss of lipid binding; when associated with E-68; E-71 and E-73." evidence="4">
    <original>K</original>
    <variation>E</variation>
    <location>
        <position position="66"/>
    </location>
</feature>
<feature type="mutagenesis site" description="Strong decrease of the sporulation rate." evidence="4">
    <original>L</original>
    <variation>P</variation>
    <variation>N</variation>
    <location>
        <position position="67"/>
    </location>
</feature>
<feature type="mutagenesis site" description="Strong decrease of the sporulation rate and loss of lipid binding; when associated with E-66; E-71 and E-73." evidence="4">
    <original>K</original>
    <variation>E</variation>
    <location>
        <position position="68"/>
    </location>
</feature>
<feature type="mutagenesis site" description="Strong decrease of the sporulation rate." evidence="4">
    <original>L</original>
    <variation>N</variation>
    <location>
        <position position="70"/>
    </location>
</feature>
<feature type="mutagenesis site" description="Strong decrease of the sporulation rate and loss of lipid binding; when associated with E-66; E-68 and E-73." evidence="4">
    <original>R</original>
    <variation>E</variation>
    <location>
        <position position="71"/>
    </location>
</feature>
<feature type="mutagenesis site" description="Strong decrease of the sporulation rate and loss of lipid binding; when associated with E-66; E-68 and E-71." evidence="4">
    <original>K</original>
    <variation>E</variation>
    <location>
        <position position="73"/>
    </location>
</feature>
<feature type="sequence conflict" description="In Ref. 3; AAT92904." evidence="6" ref="3">
    <original>R</original>
    <variation>K</variation>
    <location>
        <position position="59"/>
    </location>
</feature>
<proteinExistence type="evidence at protein level"/>
<gene>
    <name type="primary">SPO20</name>
    <name type="ordered locus">YMR017W</name>
    <name type="ORF">YM9711.05</name>
</gene>
<dbReference type="EMBL" id="Z49211">
    <property type="protein sequence ID" value="CAA89119.1"/>
    <property type="molecule type" value="Genomic_DNA"/>
</dbReference>
<dbReference type="EMBL" id="AY692885">
    <property type="protein sequence ID" value="AAT92904.1"/>
    <property type="molecule type" value="Genomic_DNA"/>
</dbReference>
<dbReference type="EMBL" id="BK006946">
    <property type="protein sequence ID" value="DAA09915.1"/>
    <property type="molecule type" value="Genomic_DNA"/>
</dbReference>
<dbReference type="PIR" id="S54018">
    <property type="entry name" value="S54018"/>
</dbReference>
<dbReference type="RefSeq" id="NP_013730.1">
    <property type="nucleotide sequence ID" value="NM_001182513.1"/>
</dbReference>
<dbReference type="SMR" id="Q04359"/>
<dbReference type="BioGRID" id="35188">
    <property type="interactions" value="58"/>
</dbReference>
<dbReference type="ComplexPortal" id="CPX-5464">
    <property type="entry name" value="Vesicular SNARE complex SSO1-SPO20-SNC1"/>
</dbReference>
<dbReference type="ComplexPortal" id="CPX-5466">
    <property type="entry name" value="Vesicular SNARE complex SSO1-SPO20-SNC2"/>
</dbReference>
<dbReference type="DIP" id="DIP-4511N"/>
<dbReference type="FunCoup" id="Q04359">
    <property type="interactions" value="199"/>
</dbReference>
<dbReference type="IntAct" id="Q04359">
    <property type="interactions" value="1"/>
</dbReference>
<dbReference type="STRING" id="4932.YMR017W"/>
<dbReference type="GlyGen" id="Q04359">
    <property type="glycosylation" value="1 site, 1 O-linked glycan (1 site)"/>
</dbReference>
<dbReference type="iPTMnet" id="Q04359"/>
<dbReference type="PaxDb" id="4932-YMR017W"/>
<dbReference type="EnsemblFungi" id="YMR017W_mRNA">
    <property type="protein sequence ID" value="YMR017W"/>
    <property type="gene ID" value="YMR017W"/>
</dbReference>
<dbReference type="GeneID" id="855031"/>
<dbReference type="KEGG" id="sce:YMR017W"/>
<dbReference type="AGR" id="SGD:S000004619"/>
<dbReference type="SGD" id="S000004619">
    <property type="gene designation" value="SPO20"/>
</dbReference>
<dbReference type="VEuPathDB" id="FungiDB:YMR017W"/>
<dbReference type="eggNOG" id="KOG3065">
    <property type="taxonomic scope" value="Eukaryota"/>
</dbReference>
<dbReference type="HOGENOM" id="CLU_694853_0_0_1"/>
<dbReference type="InParanoid" id="Q04359"/>
<dbReference type="OMA" id="FRMDNCS"/>
<dbReference type="OrthoDB" id="18679at2759"/>
<dbReference type="BioCyc" id="YEAST:G3O-32723-MONOMER"/>
<dbReference type="Reactome" id="R-SCE-199992">
    <property type="pathway name" value="trans-Golgi Network Vesicle Budding"/>
</dbReference>
<dbReference type="Reactome" id="R-SCE-6798695">
    <property type="pathway name" value="Neutrophil degranulation"/>
</dbReference>
<dbReference type="Reactome" id="R-SCE-8980692">
    <property type="pathway name" value="RHOA GTPase cycle"/>
</dbReference>
<dbReference type="Reactome" id="R-SCE-9013026">
    <property type="pathway name" value="RHOB GTPase cycle"/>
</dbReference>
<dbReference type="Reactome" id="R-SCE-9013406">
    <property type="pathway name" value="RHOQ GTPase cycle"/>
</dbReference>
<dbReference type="BioGRID-ORCS" id="855031">
    <property type="hits" value="1 hit in 10 CRISPR screens"/>
</dbReference>
<dbReference type="PRO" id="PR:Q04359"/>
<dbReference type="Proteomes" id="UP000002311">
    <property type="component" value="Chromosome XIII"/>
</dbReference>
<dbReference type="RNAct" id="Q04359">
    <property type="molecule type" value="protein"/>
</dbReference>
<dbReference type="GO" id="GO:0000139">
    <property type="term" value="C:Golgi membrane"/>
    <property type="evidence" value="ECO:0000303"/>
    <property type="project" value="ComplexPortal"/>
</dbReference>
<dbReference type="GO" id="GO:0005634">
    <property type="term" value="C:nucleus"/>
    <property type="evidence" value="ECO:0000314"/>
    <property type="project" value="SGD"/>
</dbReference>
<dbReference type="GO" id="GO:0005886">
    <property type="term" value="C:plasma membrane"/>
    <property type="evidence" value="ECO:0000314"/>
    <property type="project" value="SGD"/>
</dbReference>
<dbReference type="GO" id="GO:0005628">
    <property type="term" value="C:prospore membrane"/>
    <property type="evidence" value="ECO:0000314"/>
    <property type="project" value="SGD"/>
</dbReference>
<dbReference type="GO" id="GO:0031201">
    <property type="term" value="C:SNARE complex"/>
    <property type="evidence" value="ECO:0000314"/>
    <property type="project" value="SGD"/>
</dbReference>
<dbReference type="GO" id="GO:0070300">
    <property type="term" value="F:phosphatidic acid binding"/>
    <property type="evidence" value="ECO:0000314"/>
    <property type="project" value="SGD"/>
</dbReference>
<dbReference type="GO" id="GO:0005546">
    <property type="term" value="F:phosphatidylinositol-4,5-bisphosphate binding"/>
    <property type="evidence" value="ECO:0000314"/>
    <property type="project" value="SGD"/>
</dbReference>
<dbReference type="GO" id="GO:0005484">
    <property type="term" value="F:SNAP receptor activity"/>
    <property type="evidence" value="ECO:0000353"/>
    <property type="project" value="SGD"/>
</dbReference>
<dbReference type="GO" id="GO:0019905">
    <property type="term" value="F:syntaxin binding"/>
    <property type="evidence" value="ECO:0000318"/>
    <property type="project" value="GO_Central"/>
</dbReference>
<dbReference type="GO" id="GO:0031321">
    <property type="term" value="P:ascospore-type prospore assembly"/>
    <property type="evidence" value="ECO:0000315"/>
    <property type="project" value="SGD"/>
</dbReference>
<dbReference type="GO" id="GO:0006887">
    <property type="term" value="P:exocytosis"/>
    <property type="evidence" value="ECO:0000318"/>
    <property type="project" value="GO_Central"/>
</dbReference>
<dbReference type="GO" id="GO:0048210">
    <property type="term" value="P:Golgi vesicle fusion to target membrane"/>
    <property type="evidence" value="ECO:0000303"/>
    <property type="project" value="ComplexPortal"/>
</dbReference>
<dbReference type="GO" id="GO:0006886">
    <property type="term" value="P:intracellular protein transport"/>
    <property type="evidence" value="ECO:0000303"/>
    <property type="project" value="ComplexPortal"/>
</dbReference>
<dbReference type="GO" id="GO:0043934">
    <property type="term" value="P:sporulation"/>
    <property type="evidence" value="ECO:0000314"/>
    <property type="project" value="ComplexPortal"/>
</dbReference>
<dbReference type="GO" id="GO:0006906">
    <property type="term" value="P:vesicle fusion"/>
    <property type="evidence" value="ECO:0000314"/>
    <property type="project" value="ComplexPortal"/>
</dbReference>
<dbReference type="CDD" id="cd15886">
    <property type="entry name" value="SNARE_SEC9N"/>
    <property type="match status" value="1"/>
</dbReference>
<dbReference type="Gene3D" id="1.20.5.110">
    <property type="match status" value="2"/>
</dbReference>
<dbReference type="InterPro" id="IPR000727">
    <property type="entry name" value="T_SNARE_dom"/>
</dbReference>
<dbReference type="PANTHER" id="PTHR19305">
    <property type="entry name" value="SYNAPTOSOMAL ASSOCIATED PROTEIN"/>
    <property type="match status" value="1"/>
</dbReference>
<dbReference type="PANTHER" id="PTHR19305:SF9">
    <property type="entry name" value="SYNAPTOSOMAL-ASSOCIATED PROTEIN 29"/>
    <property type="match status" value="1"/>
</dbReference>
<dbReference type="SMART" id="SM00397">
    <property type="entry name" value="t_SNARE"/>
    <property type="match status" value="1"/>
</dbReference>
<dbReference type="SUPFAM" id="SSF58038">
    <property type="entry name" value="SNARE fusion complex"/>
    <property type="match status" value="2"/>
</dbReference>
<dbReference type="PROSITE" id="PS50192">
    <property type="entry name" value="T_SNARE"/>
    <property type="match status" value="1"/>
</dbReference>
<evidence type="ECO:0000255" key="1">
    <source>
        <dbReference type="PROSITE-ProRule" id="PRU00202"/>
    </source>
</evidence>
<evidence type="ECO:0000256" key="2">
    <source>
        <dbReference type="SAM" id="MobiDB-lite"/>
    </source>
</evidence>
<evidence type="ECO:0000269" key="3">
    <source>
    </source>
</evidence>
<evidence type="ECO:0000269" key="4">
    <source>
    </source>
</evidence>
<evidence type="ECO:0000269" key="5">
    <source>
    </source>
</evidence>
<evidence type="ECO:0000305" key="6"/>
<organism>
    <name type="scientific">Saccharomyces cerevisiae (strain ATCC 204508 / S288c)</name>
    <name type="common">Baker's yeast</name>
    <dbReference type="NCBI Taxonomy" id="559292"/>
    <lineage>
        <taxon>Eukaryota</taxon>
        <taxon>Fungi</taxon>
        <taxon>Dikarya</taxon>
        <taxon>Ascomycota</taxon>
        <taxon>Saccharomycotina</taxon>
        <taxon>Saccharomycetes</taxon>
        <taxon>Saccharomycetales</taxon>
        <taxon>Saccharomycetaceae</taxon>
        <taxon>Saccharomyces</taxon>
    </lineage>
</organism>
<accession>Q04359</accession>
<accession>D6VZJ1</accession>
<accession>Q6B245</accession>
<protein>
    <recommendedName>
        <fullName>Sporulation-specific protein 20</fullName>
    </recommendedName>
</protein>
<sequence>MGFRKILASKSHHSRHHNQHHKNLKLQNHRYVLISNITGSHETKYLSPFRMDNCSGSRRRDRLHVKLKSLRNKIHKQLHPNCRFDDATKTSDDKCVSYEVPERDGLATISLEEVFPKSNRCQIPEENLGETDSVIHRDLGNFANENDYPQWRKVESQYNLENVQPEEDEIVDRLRSEIRSTKLKSVKTTSRTLEKAIEARCTGKRVLQQLSCQSNQLTKIESNCDMLKIQSNVADRKIDELAHENRSLLALKSPNPFRKKREREKRDQIYNLKLKHRHLQQETMKRAQDSDKNLAINLSSEYGRYGQGVERQRILRDAQKYQFEADEEDNQMEIDLYGNLEQIKAVSGDLKIMAHAFGREFEAQNTRMFDIENNVQQADNALQAKRYRLEKVIGKRW</sequence>
<reference key="1">
    <citation type="journal article" date="1997" name="Nature">
        <title>The nucleotide sequence of Saccharomyces cerevisiae chromosome XIII.</title>
        <authorList>
            <person name="Bowman S."/>
            <person name="Churcher C.M."/>
            <person name="Badcock K."/>
            <person name="Brown D."/>
            <person name="Chillingworth T."/>
            <person name="Connor R."/>
            <person name="Dedman K."/>
            <person name="Devlin K."/>
            <person name="Gentles S."/>
            <person name="Hamlin N."/>
            <person name="Hunt S."/>
            <person name="Jagels K."/>
            <person name="Lye G."/>
            <person name="Moule S."/>
            <person name="Odell C."/>
            <person name="Pearson D."/>
            <person name="Rajandream M.A."/>
            <person name="Rice P."/>
            <person name="Skelton J."/>
            <person name="Walsh S.V."/>
            <person name="Whitehead S."/>
            <person name="Barrell B.G."/>
        </authorList>
    </citation>
    <scope>NUCLEOTIDE SEQUENCE [LARGE SCALE GENOMIC DNA]</scope>
    <source>
        <strain>ATCC 204508 / S288c</strain>
    </source>
</reference>
<reference key="2">
    <citation type="journal article" date="2014" name="G3 (Bethesda)">
        <title>The reference genome sequence of Saccharomyces cerevisiae: Then and now.</title>
        <authorList>
            <person name="Engel S.R."/>
            <person name="Dietrich F.S."/>
            <person name="Fisk D.G."/>
            <person name="Binkley G."/>
            <person name="Balakrishnan R."/>
            <person name="Costanzo M.C."/>
            <person name="Dwight S.S."/>
            <person name="Hitz B.C."/>
            <person name="Karra K."/>
            <person name="Nash R.S."/>
            <person name="Weng S."/>
            <person name="Wong E.D."/>
            <person name="Lloyd P."/>
            <person name="Skrzypek M.S."/>
            <person name="Miyasato S.R."/>
            <person name="Simison M."/>
            <person name="Cherry J.M."/>
        </authorList>
    </citation>
    <scope>GENOME REANNOTATION</scope>
    <source>
        <strain>ATCC 204508 / S288c</strain>
    </source>
</reference>
<reference key="3">
    <citation type="journal article" date="2007" name="Genome Res.">
        <title>Approaching a complete repository of sequence-verified protein-encoding clones for Saccharomyces cerevisiae.</title>
        <authorList>
            <person name="Hu Y."/>
            <person name="Rolfs A."/>
            <person name="Bhullar B."/>
            <person name="Murthy T.V.S."/>
            <person name="Zhu C."/>
            <person name="Berger M.F."/>
            <person name="Camargo A.A."/>
            <person name="Kelley F."/>
            <person name="McCarron S."/>
            <person name="Jepson D."/>
            <person name="Richardson A."/>
            <person name="Raphael J."/>
            <person name="Moreira D."/>
            <person name="Taycher E."/>
            <person name="Zuo D."/>
            <person name="Mohr S."/>
            <person name="Kane M.F."/>
            <person name="Williamson J."/>
            <person name="Simpson A.J.G."/>
            <person name="Bulyk M.L."/>
            <person name="Harlow E."/>
            <person name="Marsischky G."/>
            <person name="Kolodner R.D."/>
            <person name="LaBaer J."/>
        </authorList>
    </citation>
    <scope>NUCLEOTIDE SEQUENCE [GENOMIC DNA]</scope>
    <source>
        <strain>ATCC 204508 / S288c</strain>
    </source>
</reference>
<reference key="4">
    <citation type="journal article" date="1997" name="Proc. Natl. Acad. Sci. U.S.A.">
        <title>A conserved domain is present in different families of vesicular fusion proteins: a new superfamily.</title>
        <authorList>
            <person name="Weimbs T."/>
            <person name="Low S.H."/>
            <person name="Chapin S.J."/>
            <person name="Mostov K.E."/>
            <person name="Bucher P."/>
            <person name="Hofmann K."/>
        </authorList>
    </citation>
    <scope>DOMAIN</scope>
</reference>
<reference key="5">
    <citation type="journal article" date="1998" name="J. Cell Biol.">
        <title>Prospore membrane formation defines a developmentally regulated branch of the secretory pathway in yeast.</title>
        <authorList>
            <person name="Neiman A.M."/>
        </authorList>
    </citation>
    <scope>FUNCTION</scope>
</reference>
<reference key="6">
    <citation type="journal article" date="2000" name="Genetics">
        <title>Identification of domains required for developmentally regulated SNARE function in Saccharomyces cerevisiae.</title>
        <authorList>
            <person name="Neiman A.M."/>
            <person name="Katz L."/>
            <person name="Brennwald P.J."/>
        </authorList>
    </citation>
    <scope>FUNCTION</scope>
    <scope>SUBCELLULAR LOCATION</scope>
    <scope>INTERACTION WITH SSO1 AND SNC2</scope>
</reference>
<reference key="7">
    <citation type="journal article" date="2004" name="Mol. Biol. Cell">
        <title>Positive and negative regulation of a SNARE protein by control of intracellular localization.</title>
        <authorList>
            <person name="Nakanishi H."/>
            <person name="de los Santos P."/>
            <person name="Neiman A.M."/>
        </authorList>
    </citation>
    <scope>FUNCTION</scope>
    <scope>DOMAINS</scope>
    <scope>SUBCELLULAR LOCATION</scope>
    <scope>MUTAGENESIS OF LYS-66; LEU-67; LYS-68; LEU-70; ARG-71 AND LYS-73</scope>
</reference>
<name>SPO20_YEAST</name>
<comment type="function">
    <text evidence="3 4 5">Required to maintain the prospore membrane to the nucleus during sporulation in order to capture the daughter nuclei and form the spores. Mediates the fusion of exocytic vesicles with the plasma membrane during sporulation through its interactions with the t-SNARE SSO1 and v-SNARE SNC2.</text>
</comment>
<comment type="subunit">
    <text evidence="3">Interacts with the t-SNARE SSO1 and the v-SNARE SNC2.</text>
</comment>
<comment type="subcellular location">
    <subcellularLocation>
        <location>Cell membrane</location>
    </subcellularLocation>
    <subcellularLocation>
        <location>Prospore membrane</location>
    </subcellularLocation>
    <text>Membrane-associated to the plasma during vegetative growth and prospore membrane associated during sporulation.</text>
</comment>
<comment type="domain">
    <text>The inhibitory region sequesters the protein in the nucleus.</text>
</comment>
<comment type="domain">
    <text>The positive regulatory region is essential and contains an amphipathic helix with hydrophobic and positive charged faces involved in the localization of the protein to the membranes through its binding to phospholipids.</text>
</comment>
<comment type="similarity">
    <text evidence="6">Belongs to the SNAP-25 family.</text>
</comment>
<keyword id="KW-1003">Cell membrane</keyword>
<keyword id="KW-0175">Coiled coil</keyword>
<keyword id="KW-0472">Membrane</keyword>
<keyword id="KW-1185">Reference proteome</keyword>
<keyword id="KW-0749">Sporulation</keyword>